<protein>
    <recommendedName>
        <fullName evidence="1">2-C-methyl-D-erythritol 4-phosphate cytidylyltransferase</fullName>
        <ecNumber evidence="1">2.7.7.60</ecNumber>
    </recommendedName>
    <alternativeName>
        <fullName evidence="1">4-diphosphocytidyl-2C-methyl-D-erythritol synthase</fullName>
    </alternativeName>
    <alternativeName>
        <fullName evidence="1">MEP cytidylyltransferase</fullName>
        <shortName evidence="1">MCT</shortName>
    </alternativeName>
</protein>
<evidence type="ECO:0000255" key="1">
    <source>
        <dbReference type="HAMAP-Rule" id="MF_00108"/>
    </source>
</evidence>
<accession>Q3ZWE1</accession>
<name>ISPD_DEHMC</name>
<organism>
    <name type="scientific">Dehalococcoides mccartyi (strain CBDB1)</name>
    <dbReference type="NCBI Taxonomy" id="255470"/>
    <lineage>
        <taxon>Bacteria</taxon>
        <taxon>Bacillati</taxon>
        <taxon>Chloroflexota</taxon>
        <taxon>Dehalococcoidia</taxon>
        <taxon>Dehalococcoidales</taxon>
        <taxon>Dehalococcoidaceae</taxon>
        <taxon>Dehalococcoides</taxon>
    </lineage>
</organism>
<dbReference type="EC" id="2.7.7.60" evidence="1"/>
<dbReference type="EMBL" id="AJ965256">
    <property type="protein sequence ID" value="CAI82334.1"/>
    <property type="molecule type" value="Genomic_DNA"/>
</dbReference>
<dbReference type="RefSeq" id="WP_011308692.1">
    <property type="nucleotide sequence ID" value="NC_007356.1"/>
</dbReference>
<dbReference type="SMR" id="Q3ZWE1"/>
<dbReference type="KEGG" id="deh:cbdbA74"/>
<dbReference type="HOGENOM" id="CLU_061281_2_2_0"/>
<dbReference type="UniPathway" id="UPA00056">
    <property type="reaction ID" value="UER00093"/>
</dbReference>
<dbReference type="Proteomes" id="UP000000433">
    <property type="component" value="Chromosome"/>
</dbReference>
<dbReference type="GO" id="GO:0050518">
    <property type="term" value="F:2-C-methyl-D-erythritol 4-phosphate cytidylyltransferase activity"/>
    <property type="evidence" value="ECO:0007669"/>
    <property type="project" value="UniProtKB-UniRule"/>
</dbReference>
<dbReference type="GO" id="GO:0019288">
    <property type="term" value="P:isopentenyl diphosphate biosynthetic process, methylerythritol 4-phosphate pathway"/>
    <property type="evidence" value="ECO:0007669"/>
    <property type="project" value="UniProtKB-UniRule"/>
</dbReference>
<dbReference type="CDD" id="cd02516">
    <property type="entry name" value="CDP-ME_synthetase"/>
    <property type="match status" value="1"/>
</dbReference>
<dbReference type="FunFam" id="3.90.550.10:FF:000003">
    <property type="entry name" value="2-C-methyl-D-erythritol 4-phosphate cytidylyltransferase"/>
    <property type="match status" value="1"/>
</dbReference>
<dbReference type="Gene3D" id="3.90.550.10">
    <property type="entry name" value="Spore Coat Polysaccharide Biosynthesis Protein SpsA, Chain A"/>
    <property type="match status" value="1"/>
</dbReference>
<dbReference type="HAMAP" id="MF_00108">
    <property type="entry name" value="IspD"/>
    <property type="match status" value="1"/>
</dbReference>
<dbReference type="InterPro" id="IPR001228">
    <property type="entry name" value="IspD"/>
</dbReference>
<dbReference type="InterPro" id="IPR034683">
    <property type="entry name" value="IspD/TarI"/>
</dbReference>
<dbReference type="InterPro" id="IPR050088">
    <property type="entry name" value="IspD/TarI_cytidylyltransf_bact"/>
</dbReference>
<dbReference type="InterPro" id="IPR018294">
    <property type="entry name" value="ISPD_synthase_CS"/>
</dbReference>
<dbReference type="InterPro" id="IPR029044">
    <property type="entry name" value="Nucleotide-diphossugar_trans"/>
</dbReference>
<dbReference type="NCBIfam" id="TIGR00453">
    <property type="entry name" value="ispD"/>
    <property type="match status" value="1"/>
</dbReference>
<dbReference type="NCBIfam" id="NF001186">
    <property type="entry name" value="PRK00155.2-3"/>
    <property type="match status" value="1"/>
</dbReference>
<dbReference type="PANTHER" id="PTHR32125">
    <property type="entry name" value="2-C-METHYL-D-ERYTHRITOL 4-PHOSPHATE CYTIDYLYLTRANSFERASE, CHLOROPLASTIC"/>
    <property type="match status" value="1"/>
</dbReference>
<dbReference type="PANTHER" id="PTHR32125:SF4">
    <property type="entry name" value="2-C-METHYL-D-ERYTHRITOL 4-PHOSPHATE CYTIDYLYLTRANSFERASE, CHLOROPLASTIC"/>
    <property type="match status" value="1"/>
</dbReference>
<dbReference type="Pfam" id="PF01128">
    <property type="entry name" value="IspD"/>
    <property type="match status" value="1"/>
</dbReference>
<dbReference type="SUPFAM" id="SSF53448">
    <property type="entry name" value="Nucleotide-diphospho-sugar transferases"/>
    <property type="match status" value="1"/>
</dbReference>
<dbReference type="PROSITE" id="PS01295">
    <property type="entry name" value="ISPD"/>
    <property type="match status" value="1"/>
</dbReference>
<reference key="1">
    <citation type="journal article" date="2005" name="Nat. Biotechnol.">
        <title>Genome sequence of the chlorinated compound-respiring bacterium Dehalococcoides species strain CBDB1.</title>
        <authorList>
            <person name="Kube M."/>
            <person name="Beck A."/>
            <person name="Zinder S.H."/>
            <person name="Kuhl H."/>
            <person name="Reinhardt R."/>
            <person name="Adrian L."/>
        </authorList>
    </citation>
    <scope>NUCLEOTIDE SEQUENCE [LARGE SCALE GENOMIC DNA]</scope>
    <source>
        <strain>CBDB1</strain>
    </source>
</reference>
<feature type="chain" id="PRO_0000237788" description="2-C-methyl-D-erythritol 4-phosphate cytidylyltransferase">
    <location>
        <begin position="1"/>
        <end position="227"/>
    </location>
</feature>
<feature type="site" description="Transition state stabilizer" evidence="1">
    <location>
        <position position="19"/>
    </location>
</feature>
<feature type="site" description="Transition state stabilizer" evidence="1">
    <location>
        <position position="25"/>
    </location>
</feature>
<feature type="site" description="Positions MEP for the nucleophilic attack" evidence="1">
    <location>
        <position position="156"/>
    </location>
</feature>
<feature type="site" description="Positions MEP for the nucleophilic attack" evidence="1">
    <location>
        <position position="209"/>
    </location>
</feature>
<keyword id="KW-0414">Isoprene biosynthesis</keyword>
<keyword id="KW-0548">Nucleotidyltransferase</keyword>
<keyword id="KW-0808">Transferase</keyword>
<comment type="function">
    <text evidence="1">Catalyzes the formation of 4-diphosphocytidyl-2-C-methyl-D-erythritol from CTP and 2-C-methyl-D-erythritol 4-phosphate (MEP).</text>
</comment>
<comment type="catalytic activity">
    <reaction evidence="1">
        <text>2-C-methyl-D-erythritol 4-phosphate + CTP + H(+) = 4-CDP-2-C-methyl-D-erythritol + diphosphate</text>
        <dbReference type="Rhea" id="RHEA:13429"/>
        <dbReference type="ChEBI" id="CHEBI:15378"/>
        <dbReference type="ChEBI" id="CHEBI:33019"/>
        <dbReference type="ChEBI" id="CHEBI:37563"/>
        <dbReference type="ChEBI" id="CHEBI:57823"/>
        <dbReference type="ChEBI" id="CHEBI:58262"/>
        <dbReference type="EC" id="2.7.7.60"/>
    </reaction>
</comment>
<comment type="pathway">
    <text evidence="1">Isoprenoid biosynthesis; isopentenyl diphosphate biosynthesis via DXP pathway; isopentenyl diphosphate from 1-deoxy-D-xylulose 5-phosphate: step 2/6.</text>
</comment>
<comment type="similarity">
    <text evidence="1">Belongs to the IspD/TarI cytidylyltransferase family. IspD subfamily.</text>
</comment>
<sequence>MFLNEKVGAVIVAAGQSRRMEGQDKIFALLAGKPVLAHTLSVFQESPQVDDIALVMAEHNIEKAKELVKEYNFSKVIAICSGGTLRQDSVRSGLSALCDCGWILIHDGARPLLEPDSIPEGLEAAKLCGSAIAAVPLKDTIKEISPEGLVEKTLPRERLISVQTPQVFRADIIQKAYQRVGIIATDDAQLVEKLKLPVRIFSGACANIKITTPEDLLMAEILLKKGR</sequence>
<gene>
    <name evidence="1" type="primary">ispD</name>
    <name type="ordered locus">cbdbA74</name>
</gene>
<proteinExistence type="inferred from homology"/>